<proteinExistence type="evidence at protein level"/>
<comment type="function">
    <text evidence="1 2">H(+)-stimulated, divalent metal cation uptake system. Transports zinc and iron. Can also interact with manganese and copper.</text>
</comment>
<comment type="biophysicochemical properties">
    <phDependence>
        <text evidence="2">Optimum pH is 5.5-6.5.</text>
    </phDependence>
</comment>
<comment type="subcellular location">
    <subcellularLocation>
        <location evidence="4">Cell membrane</location>
        <topology evidence="4">Multi-pass membrane protein</topology>
    </subcellularLocation>
</comment>
<comment type="induction">
    <text evidence="2">Up-regulated in response to iron and copper.</text>
</comment>
<comment type="disruption phenotype">
    <text evidence="3">Disruption impairs growth under conditions of limited iron avaibility, but does not affect virulence in mice.</text>
</comment>
<comment type="similarity">
    <text evidence="1">Belongs to the NRAMP family.</text>
</comment>
<protein>
    <recommendedName>
        <fullName evidence="1">Divalent metal cation transporter MntH</fullName>
    </recommendedName>
    <alternativeName>
        <fullName>Mramp</fullName>
    </alternativeName>
</protein>
<feature type="chain" id="PRO_0000212627" description="Divalent metal cation transporter MntH">
    <location>
        <begin position="1"/>
        <end position="428"/>
    </location>
</feature>
<feature type="transmembrane region" description="Helical" evidence="1">
    <location>
        <begin position="33"/>
        <end position="53"/>
    </location>
</feature>
<feature type="transmembrane region" description="Helical" evidence="1">
    <location>
        <begin position="60"/>
        <end position="80"/>
    </location>
</feature>
<feature type="transmembrane region" description="Helical" evidence="1">
    <location>
        <begin position="114"/>
        <end position="134"/>
    </location>
</feature>
<feature type="transmembrane region" description="Helical" evidence="1">
    <location>
        <begin position="136"/>
        <end position="156"/>
    </location>
</feature>
<feature type="transmembrane region" description="Helical" evidence="1">
    <location>
        <begin position="171"/>
        <end position="191"/>
    </location>
</feature>
<feature type="transmembrane region" description="Helical" evidence="1">
    <location>
        <begin position="210"/>
        <end position="230"/>
    </location>
</feature>
<feature type="transmembrane region" description="Helical" evidence="1">
    <location>
        <begin position="258"/>
        <end position="278"/>
    </location>
</feature>
<feature type="transmembrane region" description="Helical" evidence="1">
    <location>
        <begin position="299"/>
        <end position="319"/>
    </location>
</feature>
<feature type="transmembrane region" description="Helical" evidence="1">
    <location>
        <begin position="334"/>
        <end position="356"/>
    </location>
</feature>
<feature type="transmembrane region" description="Helical" evidence="1">
    <location>
        <begin position="365"/>
        <end position="385"/>
    </location>
</feature>
<feature type="transmembrane region" description="Helical" evidence="1">
    <location>
        <begin position="406"/>
        <end position="426"/>
    </location>
</feature>
<name>MNTH_MYCTU</name>
<evidence type="ECO:0000255" key="1">
    <source>
        <dbReference type="HAMAP-Rule" id="MF_00221"/>
    </source>
</evidence>
<evidence type="ECO:0000269" key="2">
    <source>
    </source>
</evidence>
<evidence type="ECO:0000269" key="3">
    <source>
    </source>
</evidence>
<evidence type="ECO:0000305" key="4"/>
<dbReference type="EMBL" id="AL123456">
    <property type="protein sequence ID" value="CCP43672.1"/>
    <property type="molecule type" value="Genomic_DNA"/>
</dbReference>
<dbReference type="PIR" id="D70583">
    <property type="entry name" value="D70583"/>
</dbReference>
<dbReference type="RefSeq" id="WP_003898649.1">
    <property type="nucleotide sequence ID" value="NZ_NVQJ01000001.1"/>
</dbReference>
<dbReference type="RefSeq" id="YP_177767.1">
    <property type="nucleotide sequence ID" value="NC_000962.3"/>
</dbReference>
<dbReference type="SMR" id="P9WIZ5"/>
<dbReference type="FunCoup" id="P9WIZ5">
    <property type="interactions" value="376"/>
</dbReference>
<dbReference type="STRING" id="83332.Rv0924c"/>
<dbReference type="PaxDb" id="83332-Rv0924c"/>
<dbReference type="DNASU" id="885569"/>
<dbReference type="GeneID" id="885569"/>
<dbReference type="KEGG" id="mtu:Rv0924c"/>
<dbReference type="KEGG" id="mtv:RVBD_0924c"/>
<dbReference type="PATRIC" id="fig|83332.111.peg.1025"/>
<dbReference type="TubercuList" id="Rv0924c"/>
<dbReference type="eggNOG" id="COG1914">
    <property type="taxonomic scope" value="Bacteria"/>
</dbReference>
<dbReference type="InParanoid" id="P9WIZ5"/>
<dbReference type="OrthoDB" id="9787548at2"/>
<dbReference type="PhylomeDB" id="P9WIZ5"/>
<dbReference type="Proteomes" id="UP000001584">
    <property type="component" value="Chromosome"/>
</dbReference>
<dbReference type="GO" id="GO:0005886">
    <property type="term" value="C:plasma membrane"/>
    <property type="evidence" value="ECO:0000318"/>
    <property type="project" value="GO_Central"/>
</dbReference>
<dbReference type="GO" id="GO:0015086">
    <property type="term" value="F:cadmium ion transmembrane transporter activity"/>
    <property type="evidence" value="ECO:0000318"/>
    <property type="project" value="GO_Central"/>
</dbReference>
<dbReference type="GO" id="GO:0005384">
    <property type="term" value="F:manganese ion transmembrane transporter activity"/>
    <property type="evidence" value="ECO:0000318"/>
    <property type="project" value="GO_Central"/>
</dbReference>
<dbReference type="GO" id="GO:0046872">
    <property type="term" value="F:metal ion binding"/>
    <property type="evidence" value="ECO:0007669"/>
    <property type="project" value="UniProtKB-UniRule"/>
</dbReference>
<dbReference type="GO" id="GO:0015293">
    <property type="term" value="F:symporter activity"/>
    <property type="evidence" value="ECO:0007669"/>
    <property type="project" value="UniProtKB-UniRule"/>
</dbReference>
<dbReference type="GO" id="GO:0034755">
    <property type="term" value="P:iron ion transmembrane transport"/>
    <property type="evidence" value="ECO:0000315"/>
    <property type="project" value="MTBBASE"/>
</dbReference>
<dbReference type="GO" id="GO:0071421">
    <property type="term" value="P:manganese ion transmembrane transport"/>
    <property type="evidence" value="ECO:0000315"/>
    <property type="project" value="MTBBASE"/>
</dbReference>
<dbReference type="GO" id="GO:0006828">
    <property type="term" value="P:manganese ion transport"/>
    <property type="evidence" value="ECO:0000318"/>
    <property type="project" value="GO_Central"/>
</dbReference>
<dbReference type="GO" id="GO:0071578">
    <property type="term" value="P:zinc ion import across plasma membrane"/>
    <property type="evidence" value="ECO:0000315"/>
    <property type="project" value="MTBBASE"/>
</dbReference>
<dbReference type="HAMAP" id="MF_00221">
    <property type="entry name" value="NRAMP"/>
    <property type="match status" value="1"/>
</dbReference>
<dbReference type="InterPro" id="IPR001046">
    <property type="entry name" value="NRAMP_fam"/>
</dbReference>
<dbReference type="NCBIfam" id="TIGR01197">
    <property type="entry name" value="nramp"/>
    <property type="match status" value="1"/>
</dbReference>
<dbReference type="NCBIfam" id="NF037982">
    <property type="entry name" value="Nramp_1"/>
    <property type="match status" value="1"/>
</dbReference>
<dbReference type="NCBIfam" id="NF001923">
    <property type="entry name" value="PRK00701.1"/>
    <property type="match status" value="1"/>
</dbReference>
<dbReference type="PANTHER" id="PTHR11706:SF33">
    <property type="entry name" value="NATURAL RESISTANCE-ASSOCIATED MACROPHAGE PROTEIN 2"/>
    <property type="match status" value="1"/>
</dbReference>
<dbReference type="PANTHER" id="PTHR11706">
    <property type="entry name" value="SOLUTE CARRIER PROTEIN FAMILY 11 MEMBER"/>
    <property type="match status" value="1"/>
</dbReference>
<dbReference type="Pfam" id="PF01566">
    <property type="entry name" value="Nramp"/>
    <property type="match status" value="1"/>
</dbReference>
<dbReference type="PRINTS" id="PR00447">
    <property type="entry name" value="NATRESASSCMP"/>
</dbReference>
<organism>
    <name type="scientific">Mycobacterium tuberculosis (strain ATCC 25618 / H37Rv)</name>
    <dbReference type="NCBI Taxonomy" id="83332"/>
    <lineage>
        <taxon>Bacteria</taxon>
        <taxon>Bacillati</taxon>
        <taxon>Actinomycetota</taxon>
        <taxon>Actinomycetes</taxon>
        <taxon>Mycobacteriales</taxon>
        <taxon>Mycobacteriaceae</taxon>
        <taxon>Mycobacterium</taxon>
        <taxon>Mycobacterium tuberculosis complex</taxon>
    </lineage>
</organism>
<gene>
    <name evidence="1" type="primary">mntH</name>
    <name type="ordered locus">Rv0924c</name>
    <name type="ORF">MTCY21C12.18c</name>
</gene>
<reference key="1">
    <citation type="journal article" date="1998" name="Nature">
        <title>Deciphering the biology of Mycobacterium tuberculosis from the complete genome sequence.</title>
        <authorList>
            <person name="Cole S.T."/>
            <person name="Brosch R."/>
            <person name="Parkhill J."/>
            <person name="Garnier T."/>
            <person name="Churcher C.M."/>
            <person name="Harris D.E."/>
            <person name="Gordon S.V."/>
            <person name="Eiglmeier K."/>
            <person name="Gas S."/>
            <person name="Barry C.E. III"/>
            <person name="Tekaia F."/>
            <person name="Badcock K."/>
            <person name="Basham D."/>
            <person name="Brown D."/>
            <person name="Chillingworth T."/>
            <person name="Connor R."/>
            <person name="Davies R.M."/>
            <person name="Devlin K."/>
            <person name="Feltwell T."/>
            <person name="Gentles S."/>
            <person name="Hamlin N."/>
            <person name="Holroyd S."/>
            <person name="Hornsby T."/>
            <person name="Jagels K."/>
            <person name="Krogh A."/>
            <person name="McLean J."/>
            <person name="Moule S."/>
            <person name="Murphy L.D."/>
            <person name="Oliver S."/>
            <person name="Osborne J."/>
            <person name="Quail M.A."/>
            <person name="Rajandream M.A."/>
            <person name="Rogers J."/>
            <person name="Rutter S."/>
            <person name="Seeger K."/>
            <person name="Skelton S."/>
            <person name="Squares S."/>
            <person name="Squares R."/>
            <person name="Sulston J.E."/>
            <person name="Taylor K."/>
            <person name="Whitehead S."/>
            <person name="Barrell B.G."/>
        </authorList>
    </citation>
    <scope>NUCLEOTIDE SEQUENCE [LARGE SCALE GENOMIC DNA]</scope>
    <source>
        <strain>ATCC 25618 / H37Rv</strain>
    </source>
</reference>
<reference key="2">
    <citation type="journal article" date="1999" name="J. Exp. Med.">
        <title>Mycobacterium tuberculosis expresses a novel pH-dependent divalent cation transporter belonging to the Nramp family.</title>
        <authorList>
            <person name="Agranoff D."/>
            <person name="Monahan I.M."/>
            <person name="Mangan J.A."/>
            <person name="Butcher P.D."/>
            <person name="Krishna S."/>
        </authorList>
    </citation>
    <scope>FUNCTION AS A TRANSPORTER</scope>
    <scope>BIOPHYSICOCHEMICAL PROPERTIES</scope>
    <scope>INDUCTION</scope>
    <source>
        <strain>ATCC 25618 / H37Rv</strain>
    </source>
</reference>
<reference key="3">
    <citation type="journal article" date="2002" name="Infect. Immun.">
        <title>Disruption of the gene homologous to mammalian Nramp1 in Mycobacterium tuberculosis does not affect virulence in mice.</title>
        <authorList>
            <person name="Boechat N."/>
            <person name="Lagier-Roger B."/>
            <person name="Petit S."/>
            <person name="Bordat Y."/>
            <person name="Rauzier J."/>
            <person name="Hance A.J."/>
            <person name="Gicquel B."/>
            <person name="Reyrat J.M."/>
        </authorList>
    </citation>
    <scope>DISRUPTION PHENOTYPE</scope>
    <source>
        <strain>Mt103</strain>
    </source>
</reference>
<accession>P9WIZ5</accession>
<accession>L0T844</accession>
<accession>O05916</accession>
<sequence>MAGEFRLLSHLCSRGSKVGELAQDTRTSLKTSWYLLGPAFVAAIAYVDPGNVAANVSSGAQFGYLLLWVIVAANVMAALVQYLSAKLGLVTGRSLPEAIGKRMGRPARLAYWAQAEIVAMATDVAEVIGGAIALRIMFNLPLPIGGIITGVVSLLLLTIQDRRGQRLFERVITALLLVIAIGFTASFFVVTPPPNAVLGGLAPRFQGTESVLLAAAIMGATVMPHAVYLHSGLARDRHGHPDPGPQRRRLLRVTRWDVGLAMLIAGGVNAAMLLVAALNMRGRGDTASIEGAYHAVHDTLGATIAVLFAVGLLASGLASSSVGAYAGAMIMQGLLHWSVPMLVRRLITLGPALAILTLGFDPTRTLVLSQVVLSFGIPFAVLPLVKLTGSPAVMGGDTNHRATTWVGWVVAVMVSLLNVMLIYLTVTG</sequence>
<keyword id="KW-1003">Cell membrane</keyword>
<keyword id="KW-0406">Ion transport</keyword>
<keyword id="KW-0408">Iron</keyword>
<keyword id="KW-0472">Membrane</keyword>
<keyword id="KW-1185">Reference proteome</keyword>
<keyword id="KW-0769">Symport</keyword>
<keyword id="KW-0812">Transmembrane</keyword>
<keyword id="KW-1133">Transmembrane helix</keyword>
<keyword id="KW-0813">Transport</keyword>
<keyword id="KW-0862">Zinc</keyword>